<gene>
    <name evidence="1" type="primary">rplO</name>
    <name type="ordered locus">BMEA_A1259</name>
</gene>
<organism>
    <name type="scientific">Brucella melitensis biotype 2 (strain ATCC 23457)</name>
    <dbReference type="NCBI Taxonomy" id="546272"/>
    <lineage>
        <taxon>Bacteria</taxon>
        <taxon>Pseudomonadati</taxon>
        <taxon>Pseudomonadota</taxon>
        <taxon>Alphaproteobacteria</taxon>
        <taxon>Hyphomicrobiales</taxon>
        <taxon>Brucellaceae</taxon>
        <taxon>Brucella/Ochrobactrum group</taxon>
        <taxon>Brucella</taxon>
    </lineage>
</organism>
<comment type="function">
    <text evidence="1">Binds to the 23S rRNA.</text>
</comment>
<comment type="subunit">
    <text evidence="1">Part of the 50S ribosomal subunit.</text>
</comment>
<comment type="similarity">
    <text evidence="1">Belongs to the universal ribosomal protein uL15 family.</text>
</comment>
<sequence>MKLNDLRDKPGSVKARKRVGRGIGSGTGKTGGRGVKGQKSRSGVSINGFEGGQMPIYRRLPKRGFTNIFAKSFNVVSLGRIQAAIDAGKLDAKAVVNLDSLKAAGVIRRAKDGVRILSDGELKAKVAFEVAGASKAAVEKIEKAGGSIKLPEAAAE</sequence>
<feature type="chain" id="PRO_1000166278" description="Large ribosomal subunit protein uL15">
    <location>
        <begin position="1"/>
        <end position="156"/>
    </location>
</feature>
<feature type="region of interest" description="Disordered" evidence="2">
    <location>
        <begin position="1"/>
        <end position="44"/>
    </location>
</feature>
<feature type="compositionally biased region" description="Basic and acidic residues" evidence="2">
    <location>
        <begin position="1"/>
        <end position="11"/>
    </location>
</feature>
<feature type="compositionally biased region" description="Gly residues" evidence="2">
    <location>
        <begin position="21"/>
        <end position="35"/>
    </location>
</feature>
<dbReference type="EMBL" id="CP001488">
    <property type="protein sequence ID" value="ACO00990.1"/>
    <property type="molecule type" value="Genomic_DNA"/>
</dbReference>
<dbReference type="RefSeq" id="WP_002964343.1">
    <property type="nucleotide sequence ID" value="NC_012441.1"/>
</dbReference>
<dbReference type="SMR" id="C0RJI2"/>
<dbReference type="GeneID" id="97533543"/>
<dbReference type="KEGG" id="bmi:BMEA_A1259"/>
<dbReference type="HOGENOM" id="CLU_055188_4_0_5"/>
<dbReference type="Proteomes" id="UP000001748">
    <property type="component" value="Chromosome I"/>
</dbReference>
<dbReference type="GO" id="GO:0022625">
    <property type="term" value="C:cytosolic large ribosomal subunit"/>
    <property type="evidence" value="ECO:0007669"/>
    <property type="project" value="TreeGrafter"/>
</dbReference>
<dbReference type="GO" id="GO:0019843">
    <property type="term" value="F:rRNA binding"/>
    <property type="evidence" value="ECO:0007669"/>
    <property type="project" value="UniProtKB-UniRule"/>
</dbReference>
<dbReference type="GO" id="GO:0003735">
    <property type="term" value="F:structural constituent of ribosome"/>
    <property type="evidence" value="ECO:0007669"/>
    <property type="project" value="InterPro"/>
</dbReference>
<dbReference type="GO" id="GO:0006412">
    <property type="term" value="P:translation"/>
    <property type="evidence" value="ECO:0007669"/>
    <property type="project" value="UniProtKB-UniRule"/>
</dbReference>
<dbReference type="Gene3D" id="3.100.10.10">
    <property type="match status" value="1"/>
</dbReference>
<dbReference type="HAMAP" id="MF_01341">
    <property type="entry name" value="Ribosomal_uL15"/>
    <property type="match status" value="1"/>
</dbReference>
<dbReference type="InterPro" id="IPR030878">
    <property type="entry name" value="Ribosomal_uL15"/>
</dbReference>
<dbReference type="InterPro" id="IPR021131">
    <property type="entry name" value="Ribosomal_uL15/eL18"/>
</dbReference>
<dbReference type="InterPro" id="IPR036227">
    <property type="entry name" value="Ribosomal_uL15/eL18_sf"/>
</dbReference>
<dbReference type="InterPro" id="IPR005749">
    <property type="entry name" value="Ribosomal_uL15_bac-type"/>
</dbReference>
<dbReference type="InterPro" id="IPR001196">
    <property type="entry name" value="Ribosomal_uL15_CS"/>
</dbReference>
<dbReference type="NCBIfam" id="TIGR01071">
    <property type="entry name" value="rplO_bact"/>
    <property type="match status" value="1"/>
</dbReference>
<dbReference type="PANTHER" id="PTHR12934">
    <property type="entry name" value="50S RIBOSOMAL PROTEIN L15"/>
    <property type="match status" value="1"/>
</dbReference>
<dbReference type="PANTHER" id="PTHR12934:SF11">
    <property type="entry name" value="LARGE RIBOSOMAL SUBUNIT PROTEIN UL15M"/>
    <property type="match status" value="1"/>
</dbReference>
<dbReference type="Pfam" id="PF00828">
    <property type="entry name" value="Ribosomal_L27A"/>
    <property type="match status" value="1"/>
</dbReference>
<dbReference type="SUPFAM" id="SSF52080">
    <property type="entry name" value="Ribosomal proteins L15p and L18e"/>
    <property type="match status" value="1"/>
</dbReference>
<dbReference type="PROSITE" id="PS00475">
    <property type="entry name" value="RIBOSOMAL_L15"/>
    <property type="match status" value="1"/>
</dbReference>
<protein>
    <recommendedName>
        <fullName evidence="1">Large ribosomal subunit protein uL15</fullName>
    </recommendedName>
    <alternativeName>
        <fullName evidence="3">50S ribosomal protein L15</fullName>
    </alternativeName>
</protein>
<accession>C0RJI2</accession>
<reference key="1">
    <citation type="submission" date="2009-03" db="EMBL/GenBank/DDBJ databases">
        <title>Brucella melitensis ATCC 23457 whole genome shotgun sequencing project.</title>
        <authorList>
            <person name="Setubal J.C."/>
            <person name="Boyle S."/>
            <person name="Crasta O.R."/>
            <person name="Gillespie J.J."/>
            <person name="Kenyon R.W."/>
            <person name="Lu J."/>
            <person name="Mane S."/>
            <person name="Nagrani S."/>
            <person name="Shallom J.M."/>
            <person name="Shallom S."/>
            <person name="Shukla M."/>
            <person name="Snyder E.E."/>
            <person name="Sobral B.W."/>
            <person name="Wattam A.R."/>
            <person name="Will R."/>
            <person name="Williams K."/>
            <person name="Yoo H."/>
            <person name="Munk C."/>
            <person name="Tapia R."/>
            <person name="Han C."/>
            <person name="Detter J.C."/>
            <person name="Bruce D."/>
            <person name="Brettin T.S."/>
        </authorList>
    </citation>
    <scope>NUCLEOTIDE SEQUENCE [LARGE SCALE GENOMIC DNA]</scope>
    <source>
        <strain>ATCC 23457</strain>
    </source>
</reference>
<keyword id="KW-0687">Ribonucleoprotein</keyword>
<keyword id="KW-0689">Ribosomal protein</keyword>
<keyword id="KW-0694">RNA-binding</keyword>
<keyword id="KW-0699">rRNA-binding</keyword>
<evidence type="ECO:0000255" key="1">
    <source>
        <dbReference type="HAMAP-Rule" id="MF_01341"/>
    </source>
</evidence>
<evidence type="ECO:0000256" key="2">
    <source>
        <dbReference type="SAM" id="MobiDB-lite"/>
    </source>
</evidence>
<evidence type="ECO:0000305" key="3"/>
<name>RL15_BRUMB</name>
<proteinExistence type="inferred from homology"/>